<gene>
    <name evidence="1" type="primary">argE</name>
    <name type="ordered locus">ECED1_4662</name>
</gene>
<accession>B7MR48</accession>
<proteinExistence type="inferred from homology"/>
<keyword id="KW-0028">Amino-acid biosynthesis</keyword>
<keyword id="KW-0055">Arginine biosynthesis</keyword>
<keyword id="KW-0170">Cobalt</keyword>
<keyword id="KW-0963">Cytoplasm</keyword>
<keyword id="KW-0378">Hydrolase</keyword>
<keyword id="KW-0479">Metal-binding</keyword>
<keyword id="KW-0862">Zinc</keyword>
<name>ARGE_ECO81</name>
<organism>
    <name type="scientific">Escherichia coli O81 (strain ED1a)</name>
    <dbReference type="NCBI Taxonomy" id="585397"/>
    <lineage>
        <taxon>Bacteria</taxon>
        <taxon>Pseudomonadati</taxon>
        <taxon>Pseudomonadota</taxon>
        <taxon>Gammaproteobacteria</taxon>
        <taxon>Enterobacterales</taxon>
        <taxon>Enterobacteriaceae</taxon>
        <taxon>Escherichia</taxon>
    </lineage>
</organism>
<sequence>MKNKLPPFIEIYRALIATPSISATEEALDQSNADLITLLADWFKDLGFNVEVQPVPGTRNKFNMLASCGQGAGGLLLAGHTDTVPFDDGRWTRDPFTLTEHDGKLYGLGTADMKGFFAFILDALRDVDVTKLAKPLYILATADEETSMAGARYFAETTALRPDCAIIGEPTSLQPVRAHKGHISNAIRIQGQSGHSSDPARGVNAIELMHDAIGHILQLRDNLKERYHYDAFTVPYPTLNLGHIHGGDASNRICACCELHMDIRPLPGMTLNELNGLLNDALAPVSERWPGRLTVDELHPPIPGYECPPNHQLVEVVEKLLGAKTEVVNYCTEAPFIQTLCPTLVLGPGSINQAHQPDEYLETRFIKPTRELITQVIHHFCWH</sequence>
<feature type="chain" id="PRO_1000163955" description="Acetylornithine deacetylase">
    <location>
        <begin position="1"/>
        <end position="383"/>
    </location>
</feature>
<feature type="active site" evidence="1">
    <location>
        <position position="82"/>
    </location>
</feature>
<feature type="active site" evidence="1">
    <location>
        <position position="144"/>
    </location>
</feature>
<feature type="binding site" evidence="1">
    <location>
        <position position="80"/>
    </location>
    <ligand>
        <name>Zn(2+)</name>
        <dbReference type="ChEBI" id="CHEBI:29105"/>
        <label>1</label>
    </ligand>
</feature>
<feature type="binding site" evidence="1">
    <location>
        <position position="112"/>
    </location>
    <ligand>
        <name>Zn(2+)</name>
        <dbReference type="ChEBI" id="CHEBI:29105"/>
        <label>1</label>
    </ligand>
</feature>
<feature type="binding site" evidence="1">
    <location>
        <position position="112"/>
    </location>
    <ligand>
        <name>Zn(2+)</name>
        <dbReference type="ChEBI" id="CHEBI:29105"/>
        <label>2</label>
    </ligand>
</feature>
<feature type="binding site" evidence="1">
    <location>
        <position position="145"/>
    </location>
    <ligand>
        <name>Zn(2+)</name>
        <dbReference type="ChEBI" id="CHEBI:29105"/>
        <label>2</label>
    </ligand>
</feature>
<feature type="binding site" evidence="1">
    <location>
        <position position="169"/>
    </location>
    <ligand>
        <name>Zn(2+)</name>
        <dbReference type="ChEBI" id="CHEBI:29105"/>
        <label>1</label>
    </ligand>
</feature>
<feature type="binding site" evidence="1">
    <location>
        <position position="355"/>
    </location>
    <ligand>
        <name>Zn(2+)</name>
        <dbReference type="ChEBI" id="CHEBI:29105"/>
        <label>2</label>
    </ligand>
</feature>
<comment type="function">
    <text evidence="1">Catalyzes the hydrolysis of the amide bond of N(2)-acetylated L-amino acids. Cleaves the acetyl group from N-acetyl-L-ornithine to form L-ornithine, an intermediate in L-arginine biosynthesis pathway, and a branchpoint in the synthesis of polyamines.</text>
</comment>
<comment type="catalytic activity">
    <reaction evidence="1">
        <text>N(2)-acetyl-L-ornithine + H2O = L-ornithine + acetate</text>
        <dbReference type="Rhea" id="RHEA:15941"/>
        <dbReference type="ChEBI" id="CHEBI:15377"/>
        <dbReference type="ChEBI" id="CHEBI:30089"/>
        <dbReference type="ChEBI" id="CHEBI:46911"/>
        <dbReference type="ChEBI" id="CHEBI:57805"/>
        <dbReference type="EC" id="3.5.1.16"/>
    </reaction>
</comment>
<comment type="cofactor">
    <cofactor evidence="1">
        <name>Zn(2+)</name>
        <dbReference type="ChEBI" id="CHEBI:29105"/>
    </cofactor>
    <cofactor evidence="1">
        <name>Co(2+)</name>
        <dbReference type="ChEBI" id="CHEBI:48828"/>
    </cofactor>
    <text evidence="1">Binds 2 Zn(2+) or Co(2+) ions per subunit.</text>
</comment>
<comment type="cofactor">
    <cofactor evidence="1">
        <name>glutathione</name>
        <dbReference type="ChEBI" id="CHEBI:57925"/>
    </cofactor>
</comment>
<comment type="pathway">
    <text evidence="1">Amino-acid biosynthesis; L-arginine biosynthesis; L-ornithine from N(2)-acetyl-L-ornithine (linear): step 1/1.</text>
</comment>
<comment type="subunit">
    <text evidence="1">Homodimer.</text>
</comment>
<comment type="subcellular location">
    <subcellularLocation>
        <location evidence="1">Cytoplasm</location>
    </subcellularLocation>
</comment>
<comment type="similarity">
    <text evidence="1">Belongs to the peptidase M20A family. ArgE subfamily.</text>
</comment>
<protein>
    <recommendedName>
        <fullName evidence="1">Acetylornithine deacetylase</fullName>
        <shortName evidence="1">AO</shortName>
        <shortName evidence="1">Acetylornithinase</shortName>
        <ecNumber evidence="1">3.5.1.16</ecNumber>
    </recommendedName>
    <alternativeName>
        <fullName evidence="1">N-acetylornithinase</fullName>
        <shortName evidence="1">NAO</shortName>
    </alternativeName>
</protein>
<dbReference type="EC" id="3.5.1.16" evidence="1"/>
<dbReference type="EMBL" id="CU928162">
    <property type="protein sequence ID" value="CAR10632.1"/>
    <property type="molecule type" value="Genomic_DNA"/>
</dbReference>
<dbReference type="RefSeq" id="WP_001298411.1">
    <property type="nucleotide sequence ID" value="NC_011745.1"/>
</dbReference>
<dbReference type="SMR" id="B7MR48"/>
<dbReference type="MEROPS" id="M20.974"/>
<dbReference type="KEGG" id="ecq:ECED1_4662"/>
<dbReference type="HOGENOM" id="CLU_021802_2_4_6"/>
<dbReference type="UniPathway" id="UPA00068">
    <property type="reaction ID" value="UER00110"/>
</dbReference>
<dbReference type="Proteomes" id="UP000000748">
    <property type="component" value="Chromosome"/>
</dbReference>
<dbReference type="GO" id="GO:0005737">
    <property type="term" value="C:cytoplasm"/>
    <property type="evidence" value="ECO:0007669"/>
    <property type="project" value="UniProtKB-SubCell"/>
</dbReference>
<dbReference type="GO" id="GO:0008777">
    <property type="term" value="F:acetylornithine deacetylase activity"/>
    <property type="evidence" value="ECO:0007669"/>
    <property type="project" value="UniProtKB-UniRule"/>
</dbReference>
<dbReference type="GO" id="GO:0008270">
    <property type="term" value="F:zinc ion binding"/>
    <property type="evidence" value="ECO:0007669"/>
    <property type="project" value="UniProtKB-UniRule"/>
</dbReference>
<dbReference type="GO" id="GO:0006526">
    <property type="term" value="P:L-arginine biosynthetic process"/>
    <property type="evidence" value="ECO:0007669"/>
    <property type="project" value="UniProtKB-UniRule"/>
</dbReference>
<dbReference type="CDD" id="cd03894">
    <property type="entry name" value="M20_ArgE"/>
    <property type="match status" value="1"/>
</dbReference>
<dbReference type="FunFam" id="3.30.70.360:FF:000003">
    <property type="entry name" value="Acetylornithine deacetylase"/>
    <property type="match status" value="1"/>
</dbReference>
<dbReference type="Gene3D" id="3.30.70.360">
    <property type="match status" value="1"/>
</dbReference>
<dbReference type="Gene3D" id="3.40.630.10">
    <property type="entry name" value="Zn peptidases"/>
    <property type="match status" value="1"/>
</dbReference>
<dbReference type="HAMAP" id="MF_01108">
    <property type="entry name" value="ArgE"/>
    <property type="match status" value="1"/>
</dbReference>
<dbReference type="InterPro" id="IPR010169">
    <property type="entry name" value="AcOrn-deacetyl"/>
</dbReference>
<dbReference type="InterPro" id="IPR001261">
    <property type="entry name" value="ArgE/DapE_CS"/>
</dbReference>
<dbReference type="InterPro" id="IPR036264">
    <property type="entry name" value="Bact_exopeptidase_dim_dom"/>
</dbReference>
<dbReference type="InterPro" id="IPR002933">
    <property type="entry name" value="Peptidase_M20"/>
</dbReference>
<dbReference type="InterPro" id="IPR011650">
    <property type="entry name" value="Peptidase_M20_dimer"/>
</dbReference>
<dbReference type="InterPro" id="IPR050072">
    <property type="entry name" value="Peptidase_M20A"/>
</dbReference>
<dbReference type="NCBIfam" id="TIGR01892">
    <property type="entry name" value="AcOrn-deacetyl"/>
    <property type="match status" value="1"/>
</dbReference>
<dbReference type="NCBIfam" id="NF003474">
    <property type="entry name" value="PRK05111.1"/>
    <property type="match status" value="1"/>
</dbReference>
<dbReference type="PANTHER" id="PTHR43808">
    <property type="entry name" value="ACETYLORNITHINE DEACETYLASE"/>
    <property type="match status" value="1"/>
</dbReference>
<dbReference type="PANTHER" id="PTHR43808:SF1">
    <property type="entry name" value="ACETYLORNITHINE DEACETYLASE"/>
    <property type="match status" value="1"/>
</dbReference>
<dbReference type="Pfam" id="PF07687">
    <property type="entry name" value="M20_dimer"/>
    <property type="match status" value="1"/>
</dbReference>
<dbReference type="Pfam" id="PF01546">
    <property type="entry name" value="Peptidase_M20"/>
    <property type="match status" value="1"/>
</dbReference>
<dbReference type="SUPFAM" id="SSF55031">
    <property type="entry name" value="Bacterial exopeptidase dimerisation domain"/>
    <property type="match status" value="1"/>
</dbReference>
<dbReference type="SUPFAM" id="SSF53187">
    <property type="entry name" value="Zn-dependent exopeptidases"/>
    <property type="match status" value="1"/>
</dbReference>
<dbReference type="PROSITE" id="PS00758">
    <property type="entry name" value="ARGE_DAPE_CPG2_1"/>
    <property type="match status" value="1"/>
</dbReference>
<dbReference type="PROSITE" id="PS00759">
    <property type="entry name" value="ARGE_DAPE_CPG2_2"/>
    <property type="match status" value="1"/>
</dbReference>
<evidence type="ECO:0000255" key="1">
    <source>
        <dbReference type="HAMAP-Rule" id="MF_01108"/>
    </source>
</evidence>
<reference key="1">
    <citation type="journal article" date="2009" name="PLoS Genet.">
        <title>Organised genome dynamics in the Escherichia coli species results in highly diverse adaptive paths.</title>
        <authorList>
            <person name="Touchon M."/>
            <person name="Hoede C."/>
            <person name="Tenaillon O."/>
            <person name="Barbe V."/>
            <person name="Baeriswyl S."/>
            <person name="Bidet P."/>
            <person name="Bingen E."/>
            <person name="Bonacorsi S."/>
            <person name="Bouchier C."/>
            <person name="Bouvet O."/>
            <person name="Calteau A."/>
            <person name="Chiapello H."/>
            <person name="Clermont O."/>
            <person name="Cruveiller S."/>
            <person name="Danchin A."/>
            <person name="Diard M."/>
            <person name="Dossat C."/>
            <person name="Karoui M.E."/>
            <person name="Frapy E."/>
            <person name="Garry L."/>
            <person name="Ghigo J.M."/>
            <person name="Gilles A.M."/>
            <person name="Johnson J."/>
            <person name="Le Bouguenec C."/>
            <person name="Lescat M."/>
            <person name="Mangenot S."/>
            <person name="Martinez-Jehanne V."/>
            <person name="Matic I."/>
            <person name="Nassif X."/>
            <person name="Oztas S."/>
            <person name="Petit M.A."/>
            <person name="Pichon C."/>
            <person name="Rouy Z."/>
            <person name="Ruf C.S."/>
            <person name="Schneider D."/>
            <person name="Tourret J."/>
            <person name="Vacherie B."/>
            <person name="Vallenet D."/>
            <person name="Medigue C."/>
            <person name="Rocha E.P.C."/>
            <person name="Denamur E."/>
        </authorList>
    </citation>
    <scope>NUCLEOTIDE SEQUENCE [LARGE SCALE GENOMIC DNA]</scope>
    <source>
        <strain>ED1a</strain>
    </source>
</reference>